<geneLocation type="mitochondrion"/>
<accession>Q7Y7B2</accession>
<organism>
    <name type="scientific">Lonchophylla robusta</name>
    <name type="common">Orange nectar bat</name>
    <dbReference type="NCBI Taxonomy" id="190509"/>
    <lineage>
        <taxon>Eukaryota</taxon>
        <taxon>Metazoa</taxon>
        <taxon>Chordata</taxon>
        <taxon>Craniata</taxon>
        <taxon>Vertebrata</taxon>
        <taxon>Euteleostomi</taxon>
        <taxon>Mammalia</taxon>
        <taxon>Eutheria</taxon>
        <taxon>Laurasiatheria</taxon>
        <taxon>Chiroptera</taxon>
        <taxon>Yangochiroptera</taxon>
        <taxon>Phyllostomidae</taxon>
        <taxon>Lonchophyllinae</taxon>
        <taxon>Lonchophylla</taxon>
    </lineage>
</organism>
<feature type="chain" id="PRO_0000254710" description="Cytochrome b">
    <location>
        <begin position="1"/>
        <end position="379"/>
    </location>
</feature>
<feature type="transmembrane region" description="Helical" evidence="2">
    <location>
        <begin position="33"/>
        <end position="53"/>
    </location>
</feature>
<feature type="transmembrane region" description="Helical" evidence="2">
    <location>
        <begin position="77"/>
        <end position="98"/>
    </location>
</feature>
<feature type="transmembrane region" description="Helical" evidence="2">
    <location>
        <begin position="113"/>
        <end position="133"/>
    </location>
</feature>
<feature type="transmembrane region" description="Helical" evidence="2">
    <location>
        <begin position="178"/>
        <end position="198"/>
    </location>
</feature>
<feature type="transmembrane region" description="Helical" evidence="2">
    <location>
        <begin position="226"/>
        <end position="246"/>
    </location>
</feature>
<feature type="transmembrane region" description="Helical" evidence="2">
    <location>
        <begin position="288"/>
        <end position="308"/>
    </location>
</feature>
<feature type="transmembrane region" description="Helical" evidence="2">
    <location>
        <begin position="320"/>
        <end position="340"/>
    </location>
</feature>
<feature type="transmembrane region" description="Helical" evidence="2">
    <location>
        <begin position="347"/>
        <end position="367"/>
    </location>
</feature>
<feature type="binding site" description="axial binding residue" evidence="2">
    <location>
        <position position="83"/>
    </location>
    <ligand>
        <name>heme b</name>
        <dbReference type="ChEBI" id="CHEBI:60344"/>
        <label>b562</label>
    </ligand>
    <ligandPart>
        <name>Fe</name>
        <dbReference type="ChEBI" id="CHEBI:18248"/>
    </ligandPart>
</feature>
<feature type="binding site" description="axial binding residue" evidence="2">
    <location>
        <position position="97"/>
    </location>
    <ligand>
        <name>heme b</name>
        <dbReference type="ChEBI" id="CHEBI:60344"/>
        <label>b566</label>
    </ligand>
    <ligandPart>
        <name>Fe</name>
        <dbReference type="ChEBI" id="CHEBI:18248"/>
    </ligandPart>
</feature>
<feature type="binding site" description="axial binding residue" evidence="2">
    <location>
        <position position="182"/>
    </location>
    <ligand>
        <name>heme b</name>
        <dbReference type="ChEBI" id="CHEBI:60344"/>
        <label>b562</label>
    </ligand>
    <ligandPart>
        <name>Fe</name>
        <dbReference type="ChEBI" id="CHEBI:18248"/>
    </ligandPart>
</feature>
<feature type="binding site" description="axial binding residue" evidence="2">
    <location>
        <position position="196"/>
    </location>
    <ligand>
        <name>heme b</name>
        <dbReference type="ChEBI" id="CHEBI:60344"/>
        <label>b566</label>
    </ligand>
    <ligandPart>
        <name>Fe</name>
        <dbReference type="ChEBI" id="CHEBI:18248"/>
    </ligandPart>
</feature>
<feature type="binding site" evidence="2">
    <location>
        <position position="201"/>
    </location>
    <ligand>
        <name>a ubiquinone</name>
        <dbReference type="ChEBI" id="CHEBI:16389"/>
    </ligand>
</feature>
<evidence type="ECO:0000250" key="1"/>
<evidence type="ECO:0000250" key="2">
    <source>
        <dbReference type="UniProtKB" id="P00157"/>
    </source>
</evidence>
<evidence type="ECO:0000255" key="3">
    <source>
        <dbReference type="PROSITE-ProRule" id="PRU00967"/>
    </source>
</evidence>
<evidence type="ECO:0000255" key="4">
    <source>
        <dbReference type="PROSITE-ProRule" id="PRU00968"/>
    </source>
</evidence>
<keyword id="KW-0249">Electron transport</keyword>
<keyword id="KW-0349">Heme</keyword>
<keyword id="KW-0408">Iron</keyword>
<keyword id="KW-0472">Membrane</keyword>
<keyword id="KW-0479">Metal-binding</keyword>
<keyword id="KW-0496">Mitochondrion</keyword>
<keyword id="KW-0999">Mitochondrion inner membrane</keyword>
<keyword id="KW-0679">Respiratory chain</keyword>
<keyword id="KW-0812">Transmembrane</keyword>
<keyword id="KW-1133">Transmembrane helix</keyword>
<keyword id="KW-0813">Transport</keyword>
<keyword id="KW-0830">Ubiquinone</keyword>
<reference key="1">
    <citation type="journal article" date="2004" name="J. Mammal.">
        <title>Phylogeny of the Lonchophyllini (Chiroptera: Phyllostomidae).</title>
        <authorList>
            <person name="Davalos L.M."/>
            <person name="Jansa S.A."/>
        </authorList>
    </citation>
    <scope>NUCLEOTIDE SEQUENCE [GENOMIC DNA]</scope>
    <source>
        <strain>Isolate MHN512</strain>
        <strain>Isolate MHN513</strain>
        <strain>Isolate MHN514</strain>
    </source>
</reference>
<comment type="function">
    <text evidence="2">Component of the ubiquinol-cytochrome c reductase complex (complex III or cytochrome b-c1 complex) that is part of the mitochondrial respiratory chain. The b-c1 complex mediates electron transfer from ubiquinol to cytochrome c. Contributes to the generation of a proton gradient across the mitochondrial membrane that is then used for ATP synthesis.</text>
</comment>
<comment type="cofactor">
    <cofactor evidence="2">
        <name>heme b</name>
        <dbReference type="ChEBI" id="CHEBI:60344"/>
    </cofactor>
    <text evidence="2">Binds 2 heme b groups non-covalently.</text>
</comment>
<comment type="subunit">
    <text evidence="2">The cytochrome bc1 complex contains 11 subunits: 3 respiratory subunits (MT-CYB, CYC1 and UQCRFS1), 2 core proteins (UQCRC1 and UQCRC2) and 6 low-molecular weight proteins (UQCRH/QCR6, UQCRB/QCR7, UQCRQ/QCR8, UQCR10/QCR9, UQCR11/QCR10 and a cleavage product of UQCRFS1). This cytochrome bc1 complex then forms a dimer.</text>
</comment>
<comment type="subcellular location">
    <subcellularLocation>
        <location evidence="2">Mitochondrion inner membrane</location>
        <topology evidence="2">Multi-pass membrane protein</topology>
    </subcellularLocation>
</comment>
<comment type="miscellaneous">
    <text evidence="1">Heme 1 (or BL or b562) is low-potential and absorbs at about 562 nm, and heme 2 (or BH or b566) is high-potential and absorbs at about 566 nm.</text>
</comment>
<comment type="similarity">
    <text evidence="3 4">Belongs to the cytochrome b family.</text>
</comment>
<comment type="caution">
    <text evidence="2">The full-length protein contains only eight transmembrane helices, not nine as predicted by bioinformatics tools.</text>
</comment>
<name>CYB_LONRO</name>
<protein>
    <recommendedName>
        <fullName>Cytochrome b</fullName>
    </recommendedName>
    <alternativeName>
        <fullName>Complex III subunit 3</fullName>
    </alternativeName>
    <alternativeName>
        <fullName>Complex III subunit III</fullName>
    </alternativeName>
    <alternativeName>
        <fullName>Cytochrome b-c1 complex subunit 3</fullName>
    </alternativeName>
    <alternativeName>
        <fullName>Ubiquinol-cytochrome-c reductase complex cytochrome b subunit</fullName>
    </alternativeName>
</protein>
<gene>
    <name type="primary">MT-CYB</name>
    <name type="synonym">COB</name>
    <name type="synonym">CYTB</name>
    <name type="synonym">MTCYB</name>
</gene>
<sequence length="379" mass="42664">MTNIRKTHPLLKILNSSFVDLPAPSNLSSWWNFGSLLGVCLAVQILTGLFLAMHYTADTATAFNSVAHICRDVNYGWLLRYLHANGASMFFICLYLHVGRGLYYGSYTYTETWNVGILLLFTVMATAFMGYVLPWGQMSFWGATVITNLLSAIPYIGTELVQWIWGGFSVDKATLTRFFTFHFLFPFIVAALVIVHLLFLHETGSNNPTGIPSDPDMIPFHPYYTIKDILGFLIMLTALSTLVLFSPDLLGDPDNYTPANPLNTPPHIKPEWYFLFAYAILRSIPNKLGGVLALVLSILILAIVPILHTSKQRSMMFRPLSQCLFWLLVAVLLTLTWIGGQPVEHPYVIIGQTASVLYFMILLILMPLISIMENKLLKW</sequence>
<dbReference type="EMBL" id="AF423088">
    <property type="protein sequence ID" value="AAP80156.1"/>
    <property type="molecule type" value="Genomic_DNA"/>
</dbReference>
<dbReference type="EMBL" id="AF423089">
    <property type="protein sequence ID" value="AAP80157.1"/>
    <property type="molecule type" value="Genomic_DNA"/>
</dbReference>
<dbReference type="EMBL" id="AF423090">
    <property type="protein sequence ID" value="AAP80158.1"/>
    <property type="molecule type" value="Genomic_DNA"/>
</dbReference>
<dbReference type="SMR" id="Q7Y7B2"/>
<dbReference type="GO" id="GO:0005743">
    <property type="term" value="C:mitochondrial inner membrane"/>
    <property type="evidence" value="ECO:0007669"/>
    <property type="project" value="UniProtKB-SubCell"/>
</dbReference>
<dbReference type="GO" id="GO:0045275">
    <property type="term" value="C:respiratory chain complex III"/>
    <property type="evidence" value="ECO:0007669"/>
    <property type="project" value="InterPro"/>
</dbReference>
<dbReference type="GO" id="GO:0046872">
    <property type="term" value="F:metal ion binding"/>
    <property type="evidence" value="ECO:0007669"/>
    <property type="project" value="UniProtKB-KW"/>
</dbReference>
<dbReference type="GO" id="GO:0008121">
    <property type="term" value="F:ubiquinol-cytochrome-c reductase activity"/>
    <property type="evidence" value="ECO:0007669"/>
    <property type="project" value="InterPro"/>
</dbReference>
<dbReference type="GO" id="GO:0006122">
    <property type="term" value="P:mitochondrial electron transport, ubiquinol to cytochrome c"/>
    <property type="evidence" value="ECO:0007669"/>
    <property type="project" value="TreeGrafter"/>
</dbReference>
<dbReference type="CDD" id="cd00290">
    <property type="entry name" value="cytochrome_b_C"/>
    <property type="match status" value="1"/>
</dbReference>
<dbReference type="CDD" id="cd00284">
    <property type="entry name" value="Cytochrome_b_N"/>
    <property type="match status" value="1"/>
</dbReference>
<dbReference type="FunFam" id="1.20.810.10:FF:000002">
    <property type="entry name" value="Cytochrome b"/>
    <property type="match status" value="1"/>
</dbReference>
<dbReference type="Gene3D" id="1.20.810.10">
    <property type="entry name" value="Cytochrome Bc1 Complex, Chain C"/>
    <property type="match status" value="1"/>
</dbReference>
<dbReference type="InterPro" id="IPR005798">
    <property type="entry name" value="Cyt_b/b6_C"/>
</dbReference>
<dbReference type="InterPro" id="IPR036150">
    <property type="entry name" value="Cyt_b/b6_C_sf"/>
</dbReference>
<dbReference type="InterPro" id="IPR005797">
    <property type="entry name" value="Cyt_b/b6_N"/>
</dbReference>
<dbReference type="InterPro" id="IPR027387">
    <property type="entry name" value="Cytb/b6-like_sf"/>
</dbReference>
<dbReference type="InterPro" id="IPR030689">
    <property type="entry name" value="Cytochrome_b"/>
</dbReference>
<dbReference type="InterPro" id="IPR048260">
    <property type="entry name" value="Cytochrome_b_C_euk/bac"/>
</dbReference>
<dbReference type="InterPro" id="IPR048259">
    <property type="entry name" value="Cytochrome_b_N_euk/bac"/>
</dbReference>
<dbReference type="InterPro" id="IPR016174">
    <property type="entry name" value="Di-haem_cyt_TM"/>
</dbReference>
<dbReference type="PANTHER" id="PTHR19271">
    <property type="entry name" value="CYTOCHROME B"/>
    <property type="match status" value="1"/>
</dbReference>
<dbReference type="PANTHER" id="PTHR19271:SF16">
    <property type="entry name" value="CYTOCHROME B"/>
    <property type="match status" value="1"/>
</dbReference>
<dbReference type="Pfam" id="PF00032">
    <property type="entry name" value="Cytochrom_B_C"/>
    <property type="match status" value="1"/>
</dbReference>
<dbReference type="Pfam" id="PF00033">
    <property type="entry name" value="Cytochrome_B"/>
    <property type="match status" value="1"/>
</dbReference>
<dbReference type="PIRSF" id="PIRSF038885">
    <property type="entry name" value="COB"/>
    <property type="match status" value="1"/>
</dbReference>
<dbReference type="SUPFAM" id="SSF81648">
    <property type="entry name" value="a domain/subunit of cytochrome bc1 complex (Ubiquinol-cytochrome c reductase)"/>
    <property type="match status" value="1"/>
</dbReference>
<dbReference type="SUPFAM" id="SSF81342">
    <property type="entry name" value="Transmembrane di-heme cytochromes"/>
    <property type="match status" value="1"/>
</dbReference>
<dbReference type="PROSITE" id="PS51003">
    <property type="entry name" value="CYTB_CTER"/>
    <property type="match status" value="1"/>
</dbReference>
<dbReference type="PROSITE" id="PS51002">
    <property type="entry name" value="CYTB_NTER"/>
    <property type="match status" value="1"/>
</dbReference>
<proteinExistence type="inferred from homology"/>